<name>RL9_BRUA4</name>
<comment type="function">
    <text evidence="1">Binds to the 23S rRNA.</text>
</comment>
<comment type="similarity">
    <text evidence="1">Belongs to the bacterial ribosomal protein bL9 family.</text>
</comment>
<reference key="1">
    <citation type="journal article" date="2011" name="J. Bacteriol.">
        <title>Genome of Ochrobactrum anthropi ATCC 49188 T, a versatile opportunistic pathogen and symbiont of several eukaryotic hosts.</title>
        <authorList>
            <person name="Chain P.S."/>
            <person name="Lang D.M."/>
            <person name="Comerci D.J."/>
            <person name="Malfatti S.A."/>
            <person name="Vergez L.M."/>
            <person name="Shin M."/>
            <person name="Ugalde R.A."/>
            <person name="Garcia E."/>
            <person name="Tolmasky M.E."/>
        </authorList>
    </citation>
    <scope>NUCLEOTIDE SEQUENCE [LARGE SCALE GENOMIC DNA]</scope>
    <source>
        <strain>ATCC 49188 / DSM 6882 / CCUG 24695 / JCM 21032 / LMG 3331 / NBRC 15819 / NCTC 12168 / Alc 37</strain>
    </source>
</reference>
<protein>
    <recommendedName>
        <fullName evidence="1">Large ribosomal subunit protein bL9</fullName>
    </recommendedName>
    <alternativeName>
        <fullName evidence="2">50S ribosomal protein L9</fullName>
    </alternativeName>
</protein>
<organism>
    <name type="scientific">Brucella anthropi (strain ATCC 49188 / DSM 6882 / CCUG 24695 / JCM 21032 / LMG 3331 / NBRC 15819 / NCTC 12168 / Alc 37)</name>
    <name type="common">Ochrobactrum anthropi</name>
    <dbReference type="NCBI Taxonomy" id="439375"/>
    <lineage>
        <taxon>Bacteria</taxon>
        <taxon>Pseudomonadati</taxon>
        <taxon>Pseudomonadota</taxon>
        <taxon>Alphaproteobacteria</taxon>
        <taxon>Hyphomicrobiales</taxon>
        <taxon>Brucellaceae</taxon>
        <taxon>Brucella/Ochrobactrum group</taxon>
        <taxon>Brucella</taxon>
    </lineage>
</organism>
<sequence>MEVILLERIGRLGQMGETVKVKDGYARNFLLPQGKALRANEANKKKFEGQRAQLEAQNLERKNEAQAVAEKLNGESFIVVRSAGETGQLYGSVSTRDIADIISANGFTLHRNQVELNHPIKAIGLHEVSISLHPEVQVQVTVNIARSTEEAERQAKGEDLTSIEAIYGIEEQPLSEEVFDEEDEAEDQA</sequence>
<accession>A6WWE3</accession>
<gene>
    <name evidence="1" type="primary">rplI</name>
    <name type="ordered locus">Oant_0566</name>
</gene>
<dbReference type="EMBL" id="CP000758">
    <property type="protein sequence ID" value="ABS13297.1"/>
    <property type="molecule type" value="Genomic_DNA"/>
</dbReference>
<dbReference type="RefSeq" id="WP_012090836.1">
    <property type="nucleotide sequence ID" value="NC_009667.1"/>
</dbReference>
<dbReference type="SMR" id="A6WWE3"/>
<dbReference type="STRING" id="439375.Oant_0566"/>
<dbReference type="KEGG" id="oan:Oant_0566"/>
<dbReference type="PATRIC" id="fig|439375.7.peg.605"/>
<dbReference type="eggNOG" id="COG0359">
    <property type="taxonomic scope" value="Bacteria"/>
</dbReference>
<dbReference type="HOGENOM" id="CLU_078938_1_0_5"/>
<dbReference type="PhylomeDB" id="A6WWE3"/>
<dbReference type="Proteomes" id="UP000002301">
    <property type="component" value="Chromosome 1"/>
</dbReference>
<dbReference type="GO" id="GO:1990904">
    <property type="term" value="C:ribonucleoprotein complex"/>
    <property type="evidence" value="ECO:0007669"/>
    <property type="project" value="UniProtKB-KW"/>
</dbReference>
<dbReference type="GO" id="GO:0005840">
    <property type="term" value="C:ribosome"/>
    <property type="evidence" value="ECO:0007669"/>
    <property type="project" value="UniProtKB-KW"/>
</dbReference>
<dbReference type="GO" id="GO:0019843">
    <property type="term" value="F:rRNA binding"/>
    <property type="evidence" value="ECO:0007669"/>
    <property type="project" value="UniProtKB-UniRule"/>
</dbReference>
<dbReference type="GO" id="GO:0003735">
    <property type="term" value="F:structural constituent of ribosome"/>
    <property type="evidence" value="ECO:0007669"/>
    <property type="project" value="InterPro"/>
</dbReference>
<dbReference type="GO" id="GO:0006412">
    <property type="term" value="P:translation"/>
    <property type="evidence" value="ECO:0007669"/>
    <property type="project" value="UniProtKB-UniRule"/>
</dbReference>
<dbReference type="Gene3D" id="3.10.430.100">
    <property type="entry name" value="Ribosomal protein L9, C-terminal domain"/>
    <property type="match status" value="1"/>
</dbReference>
<dbReference type="Gene3D" id="3.40.5.10">
    <property type="entry name" value="Ribosomal protein L9, N-terminal domain"/>
    <property type="match status" value="1"/>
</dbReference>
<dbReference type="HAMAP" id="MF_00503">
    <property type="entry name" value="Ribosomal_bL9"/>
    <property type="match status" value="1"/>
</dbReference>
<dbReference type="InterPro" id="IPR000244">
    <property type="entry name" value="Ribosomal_bL9"/>
</dbReference>
<dbReference type="InterPro" id="IPR009027">
    <property type="entry name" value="Ribosomal_bL9/RNase_H1_N"/>
</dbReference>
<dbReference type="InterPro" id="IPR020594">
    <property type="entry name" value="Ribosomal_bL9_bac/chp"/>
</dbReference>
<dbReference type="InterPro" id="IPR020069">
    <property type="entry name" value="Ribosomal_bL9_C"/>
</dbReference>
<dbReference type="InterPro" id="IPR036791">
    <property type="entry name" value="Ribosomal_bL9_C_sf"/>
</dbReference>
<dbReference type="InterPro" id="IPR020070">
    <property type="entry name" value="Ribosomal_bL9_N"/>
</dbReference>
<dbReference type="InterPro" id="IPR036935">
    <property type="entry name" value="Ribosomal_bL9_N_sf"/>
</dbReference>
<dbReference type="NCBIfam" id="TIGR00158">
    <property type="entry name" value="L9"/>
    <property type="match status" value="1"/>
</dbReference>
<dbReference type="PANTHER" id="PTHR21368">
    <property type="entry name" value="50S RIBOSOMAL PROTEIN L9"/>
    <property type="match status" value="1"/>
</dbReference>
<dbReference type="Pfam" id="PF03948">
    <property type="entry name" value="Ribosomal_L9_C"/>
    <property type="match status" value="1"/>
</dbReference>
<dbReference type="Pfam" id="PF01281">
    <property type="entry name" value="Ribosomal_L9_N"/>
    <property type="match status" value="1"/>
</dbReference>
<dbReference type="SUPFAM" id="SSF55658">
    <property type="entry name" value="L9 N-domain-like"/>
    <property type="match status" value="1"/>
</dbReference>
<dbReference type="SUPFAM" id="SSF55653">
    <property type="entry name" value="Ribosomal protein L9 C-domain"/>
    <property type="match status" value="1"/>
</dbReference>
<dbReference type="PROSITE" id="PS00651">
    <property type="entry name" value="RIBOSOMAL_L9"/>
    <property type="match status" value="1"/>
</dbReference>
<evidence type="ECO:0000255" key="1">
    <source>
        <dbReference type="HAMAP-Rule" id="MF_00503"/>
    </source>
</evidence>
<evidence type="ECO:0000305" key="2"/>
<feature type="chain" id="PRO_1000014822" description="Large ribosomal subunit protein bL9">
    <location>
        <begin position="1"/>
        <end position="189"/>
    </location>
</feature>
<keyword id="KW-1185">Reference proteome</keyword>
<keyword id="KW-0687">Ribonucleoprotein</keyword>
<keyword id="KW-0689">Ribosomal protein</keyword>
<keyword id="KW-0694">RNA-binding</keyword>
<keyword id="KW-0699">rRNA-binding</keyword>
<proteinExistence type="inferred from homology"/>